<keyword id="KW-0963">Cytoplasm</keyword>
<keyword id="KW-0539">Nucleus</keyword>
<keyword id="KW-1185">Reference proteome</keyword>
<comment type="function">
    <text evidence="1">Probable inactive acireductone dioxygenase.</text>
</comment>
<comment type="subcellular location">
    <subcellularLocation>
        <location evidence="1">Cytoplasm</location>
    </subcellularLocation>
    <subcellularLocation>
        <location evidence="1">Nucleus</location>
    </subcellularLocation>
</comment>
<comment type="similarity">
    <text evidence="1">Belongs to the acireductone dioxygenase (ARD) family.</text>
</comment>
<comment type="caution">
    <text evidence="2">This enzyme lacks one or more conserved metal-binding sites. It may be non-functional.</text>
</comment>
<accession>C5WWY0</accession>
<name>MTND2_SORBI</name>
<sequence length="181" mass="21489">MDDSEEDQRLPHHREPKEFIPLDKLSELGILSWRLNADDWENDEKLKKIREARGYSYMDICDVCPEKLPNYEAKIKNFFEEHLRTDEEIRYCLEGSGYFDVRDENDQWIRVAVKKGGMIVLPAGMYHRFTLDTDNYIKAMRLFVGEPVWTPYNRPHDHLPARKEYVEKIINRGGNQAVEAR</sequence>
<protein>
    <recommendedName>
        <fullName evidence="1">Probable inactive acireductone dioxygenase 2</fullName>
    </recommendedName>
</protein>
<reference key="1">
    <citation type="journal article" date="2009" name="Nature">
        <title>The Sorghum bicolor genome and the diversification of grasses.</title>
        <authorList>
            <person name="Paterson A.H."/>
            <person name="Bowers J.E."/>
            <person name="Bruggmann R."/>
            <person name="Dubchak I."/>
            <person name="Grimwood J."/>
            <person name="Gundlach H."/>
            <person name="Haberer G."/>
            <person name="Hellsten U."/>
            <person name="Mitros T."/>
            <person name="Poliakov A."/>
            <person name="Schmutz J."/>
            <person name="Spannagl M."/>
            <person name="Tang H."/>
            <person name="Wang X."/>
            <person name="Wicker T."/>
            <person name="Bharti A.K."/>
            <person name="Chapman J."/>
            <person name="Feltus F.A."/>
            <person name="Gowik U."/>
            <person name="Grigoriev I.V."/>
            <person name="Lyons E."/>
            <person name="Maher C.A."/>
            <person name="Martis M."/>
            <person name="Narechania A."/>
            <person name="Otillar R.P."/>
            <person name="Penning B.W."/>
            <person name="Salamov A.A."/>
            <person name="Wang Y."/>
            <person name="Zhang L."/>
            <person name="Carpita N.C."/>
            <person name="Freeling M."/>
            <person name="Gingle A.R."/>
            <person name="Hash C.T."/>
            <person name="Keller B."/>
            <person name="Klein P."/>
            <person name="Kresovich S."/>
            <person name="McCann M.C."/>
            <person name="Ming R."/>
            <person name="Peterson D.G."/>
            <person name="Mehboob-ur-Rahman M."/>
            <person name="Ware D."/>
            <person name="Westhoff P."/>
            <person name="Mayer K.F.X."/>
            <person name="Messing J."/>
            <person name="Rokhsar D.S."/>
        </authorList>
    </citation>
    <scope>NUCLEOTIDE SEQUENCE [LARGE SCALE GENOMIC DNA]</scope>
    <source>
        <strain>cv. BTx623</strain>
    </source>
</reference>
<reference key="2">
    <citation type="journal article" date="2018" name="Plant J.">
        <title>The Sorghum bicolor reference genome: improved assembly, gene annotations, a transcriptome atlas, and signatures of genome organization.</title>
        <authorList>
            <person name="McCormick R.F."/>
            <person name="Truong S.K."/>
            <person name="Sreedasyam A."/>
            <person name="Jenkins J."/>
            <person name="Shu S."/>
            <person name="Sims D."/>
            <person name="Kennedy M."/>
            <person name="Amirebrahimi M."/>
            <person name="Weers B.D."/>
            <person name="McKinley B."/>
            <person name="Mattison A."/>
            <person name="Morishige D.T."/>
            <person name="Grimwood J."/>
            <person name="Schmutz J."/>
            <person name="Mullet J.E."/>
        </authorList>
    </citation>
    <scope>GENOME REANNOTATION</scope>
    <source>
        <strain>cv. BTx623</strain>
    </source>
</reference>
<dbReference type="EMBL" id="CM000760">
    <property type="protein sequence ID" value="EER95464.1"/>
    <property type="molecule type" value="Genomic_DNA"/>
</dbReference>
<dbReference type="RefSeq" id="XP_002468466.1">
    <property type="nucleotide sequence ID" value="XM_002468421.1"/>
</dbReference>
<dbReference type="SMR" id="C5WWY0"/>
<dbReference type="FunCoup" id="C5WWY0">
    <property type="interactions" value="1897"/>
</dbReference>
<dbReference type="STRING" id="4558.C5WWY0"/>
<dbReference type="KEGG" id="sbi:8059853"/>
<dbReference type="eggNOG" id="KOG2107">
    <property type="taxonomic scope" value="Eukaryota"/>
</dbReference>
<dbReference type="HOGENOM" id="CLU_090154_0_0_1"/>
<dbReference type="InParanoid" id="C5WWY0"/>
<dbReference type="OrthoDB" id="1867259at2759"/>
<dbReference type="Proteomes" id="UP000000768">
    <property type="component" value="Chromosome 1"/>
</dbReference>
<dbReference type="ExpressionAtlas" id="C5WWY0">
    <property type="expression patterns" value="baseline and differential"/>
</dbReference>
<dbReference type="GO" id="GO:0005737">
    <property type="term" value="C:cytoplasm"/>
    <property type="evidence" value="ECO:0007669"/>
    <property type="project" value="UniProtKB-SubCell"/>
</dbReference>
<dbReference type="GO" id="GO:0005634">
    <property type="term" value="C:nucleus"/>
    <property type="evidence" value="ECO:0007669"/>
    <property type="project" value="UniProtKB-SubCell"/>
</dbReference>
<dbReference type="GO" id="GO:0010309">
    <property type="term" value="F:acireductone dioxygenase [iron(II)-requiring] activity"/>
    <property type="evidence" value="ECO:0000318"/>
    <property type="project" value="GO_Central"/>
</dbReference>
<dbReference type="GO" id="GO:0019509">
    <property type="term" value="P:L-methionine salvage from methylthioadenosine"/>
    <property type="evidence" value="ECO:0007669"/>
    <property type="project" value="InterPro"/>
</dbReference>
<dbReference type="GO" id="GO:0006555">
    <property type="term" value="P:methionine metabolic process"/>
    <property type="evidence" value="ECO:0000318"/>
    <property type="project" value="GO_Central"/>
</dbReference>
<dbReference type="CDD" id="cd02232">
    <property type="entry name" value="cupin_ARD"/>
    <property type="match status" value="1"/>
</dbReference>
<dbReference type="FunFam" id="2.60.120.10:FF:000031">
    <property type="entry name" value="1,2-dihydroxy-3-keto-5-methylthiopentene dioxygenase"/>
    <property type="match status" value="1"/>
</dbReference>
<dbReference type="Gene3D" id="2.60.120.10">
    <property type="entry name" value="Jelly Rolls"/>
    <property type="match status" value="1"/>
</dbReference>
<dbReference type="HAMAP" id="MF_03154">
    <property type="entry name" value="Salvage_MtnD_euk"/>
    <property type="match status" value="1"/>
</dbReference>
<dbReference type="InterPro" id="IPR004313">
    <property type="entry name" value="ARD"/>
</dbReference>
<dbReference type="InterPro" id="IPR027496">
    <property type="entry name" value="ARD_euk"/>
</dbReference>
<dbReference type="InterPro" id="IPR014710">
    <property type="entry name" value="RmlC-like_jellyroll"/>
</dbReference>
<dbReference type="InterPro" id="IPR011051">
    <property type="entry name" value="RmlC_Cupin_sf"/>
</dbReference>
<dbReference type="PANTHER" id="PTHR23418">
    <property type="entry name" value="ACIREDUCTONE DIOXYGENASE"/>
    <property type="match status" value="1"/>
</dbReference>
<dbReference type="PANTHER" id="PTHR23418:SF17">
    <property type="entry name" value="ACIREDUCTONE DIOXYGENASE 2"/>
    <property type="match status" value="1"/>
</dbReference>
<dbReference type="Pfam" id="PF03079">
    <property type="entry name" value="ARD"/>
    <property type="match status" value="1"/>
</dbReference>
<dbReference type="SUPFAM" id="SSF51182">
    <property type="entry name" value="RmlC-like cupins"/>
    <property type="match status" value="1"/>
</dbReference>
<gene>
    <name type="ordered locus">Sb01g046360</name>
</gene>
<organism>
    <name type="scientific">Sorghum bicolor</name>
    <name type="common">Sorghum</name>
    <name type="synonym">Sorghum vulgare</name>
    <dbReference type="NCBI Taxonomy" id="4558"/>
    <lineage>
        <taxon>Eukaryota</taxon>
        <taxon>Viridiplantae</taxon>
        <taxon>Streptophyta</taxon>
        <taxon>Embryophyta</taxon>
        <taxon>Tracheophyta</taxon>
        <taxon>Spermatophyta</taxon>
        <taxon>Magnoliopsida</taxon>
        <taxon>Liliopsida</taxon>
        <taxon>Poales</taxon>
        <taxon>Poaceae</taxon>
        <taxon>PACMAD clade</taxon>
        <taxon>Panicoideae</taxon>
        <taxon>Andropogonodae</taxon>
        <taxon>Andropogoneae</taxon>
        <taxon>Sorghinae</taxon>
        <taxon>Sorghum</taxon>
    </lineage>
</organism>
<proteinExistence type="inferred from homology"/>
<feature type="chain" id="PRO_0000414346" description="Probable inactive acireductone dioxygenase 2">
    <location>
        <begin position="1"/>
        <end position="181"/>
    </location>
</feature>
<evidence type="ECO:0000255" key="1">
    <source>
        <dbReference type="HAMAP-Rule" id="MF_03154"/>
    </source>
</evidence>
<evidence type="ECO:0000305" key="2"/>